<comment type="function">
    <text evidence="1">Involved in pre-mRNA splicing.</text>
</comment>
<comment type="subunit">
    <text evidence="1">Associated with the spliceosome.</text>
</comment>
<comment type="subcellular location">
    <subcellularLocation>
        <location evidence="1">Cytoplasm</location>
    </subcellularLocation>
    <subcellularLocation>
        <location evidence="1">Nucleus</location>
    </subcellularLocation>
</comment>
<comment type="similarity">
    <text evidence="4">Belongs to the CWC22 family.</text>
</comment>
<accession>Q59XY0</accession>
<accession>A0A1D8PIM7</accession>
<accession>Q59XT4</accession>
<proteinExistence type="inferred from homology"/>
<feature type="chain" id="PRO_0000215669" description="Pre-mRNA-splicing factor CWC22">
    <location>
        <begin position="1"/>
        <end position="648"/>
    </location>
</feature>
<feature type="domain" description="MIF4G" evidence="2">
    <location>
        <begin position="29"/>
        <end position="237"/>
    </location>
</feature>
<feature type="domain" description="MI" evidence="2">
    <location>
        <begin position="328"/>
        <end position="460"/>
    </location>
</feature>
<feature type="region of interest" description="Disordered" evidence="3">
    <location>
        <begin position="548"/>
        <end position="648"/>
    </location>
</feature>
<feature type="compositionally biased region" description="Low complexity" evidence="3">
    <location>
        <begin position="562"/>
        <end position="594"/>
    </location>
</feature>
<feature type="compositionally biased region" description="Basic residues" evidence="3">
    <location>
        <begin position="595"/>
        <end position="605"/>
    </location>
</feature>
<feature type="compositionally biased region" description="Basic and acidic residues" evidence="3">
    <location>
        <begin position="606"/>
        <end position="626"/>
    </location>
</feature>
<feature type="compositionally biased region" description="Low complexity" evidence="3">
    <location>
        <begin position="629"/>
        <end position="648"/>
    </location>
</feature>
<sequence length="648" mass="75201">MENSTTTTTTTTVTQPDESYQRTKWIETKKNIKQLLQQLTPSNIKQTVLQLFQINLLRYQGLFIREIMKQQIRITTNAELYGSLISIINSKIPEIGELLINRLVLQFKKNYLQNNKNLINSSIIFICQLINQQVLNEILILQILQMLLESNVPNNNNNNNNNNIELAIMVLKQTGSYLFKHSNTALIMILNRLKDILQDGANANANGGNGGVGLSSWNRKSIEYILKLARNDFKNISIIKNGLDLVETEDKETHVITLEDKLYSRDHLNVFSVDEEYLDHENEYIELKKEILGETDHEDENENEIQVIETTKNYEEKITDMSQSELLQYQKTVYLTIMSSMSSDEAVHKLLKLNFKSKIKNKTKNKTKTKTNSNDNEILADMVIKCCSQEKTYSKYYGIIGEKLISRNDHWHNLFIKLFKYYYDIIENFETNSLRNLGKFFGHLFASDKLALDQAWSNIKLTEQDTNPAKRILLKFIFQEMIEELGINEVKERLINDDYLKPYIKGIFPVINVDGKDADAIRFSINFFTAIGLGVLTEEMRYVLDNLSEPEEEDDRGRSRSRSYSRSASSSSYNSRSRSYSRSQSRSSRSPNPRGRQRFKTKKHNHNESRTPSRENLKRKRSESVTDRNGNNNNNNNNNLQDLLNNLK</sequence>
<protein>
    <recommendedName>
        <fullName>Pre-mRNA-splicing factor CWC22</fullName>
    </recommendedName>
</protein>
<gene>
    <name type="primary">CWC22</name>
    <name type="ordered locus">CAALFM_C210100WA</name>
    <name type="ORF">CaO19.1771</name>
    <name type="ORF">CaO19.9340</name>
</gene>
<dbReference type="EMBL" id="CP017624">
    <property type="protein sequence ID" value="AOW27987.1"/>
    <property type="molecule type" value="Genomic_DNA"/>
</dbReference>
<dbReference type="RefSeq" id="XP_714416.2">
    <property type="nucleotide sequence ID" value="XM_709323.2"/>
</dbReference>
<dbReference type="SMR" id="Q59XY0"/>
<dbReference type="FunCoup" id="Q59XY0">
    <property type="interactions" value="951"/>
</dbReference>
<dbReference type="STRING" id="237561.Q59XY0"/>
<dbReference type="EnsemblFungi" id="C2_10100W_A-T">
    <property type="protein sequence ID" value="C2_10100W_A-T-p1"/>
    <property type="gene ID" value="C2_10100W_A"/>
</dbReference>
<dbReference type="GeneID" id="3643938"/>
<dbReference type="KEGG" id="cal:CAALFM_C210100WA"/>
<dbReference type="CGD" id="CAL0000192468">
    <property type="gene designation" value="CWC22"/>
</dbReference>
<dbReference type="VEuPathDB" id="FungiDB:C2_10100W_A"/>
<dbReference type="eggNOG" id="KOG2140">
    <property type="taxonomic scope" value="Eukaryota"/>
</dbReference>
<dbReference type="HOGENOM" id="CLU_006308_3_4_1"/>
<dbReference type="InParanoid" id="Q59XY0"/>
<dbReference type="OrthoDB" id="3938623at2759"/>
<dbReference type="PRO" id="PR:Q59XY0"/>
<dbReference type="Proteomes" id="UP000000559">
    <property type="component" value="Chromosome 2"/>
</dbReference>
<dbReference type="GO" id="GO:0071013">
    <property type="term" value="C:catalytic step 2 spliceosome"/>
    <property type="evidence" value="ECO:0000318"/>
    <property type="project" value="GO_Central"/>
</dbReference>
<dbReference type="GO" id="GO:0005737">
    <property type="term" value="C:cytoplasm"/>
    <property type="evidence" value="ECO:0007669"/>
    <property type="project" value="UniProtKB-SubCell"/>
</dbReference>
<dbReference type="GO" id="GO:0003723">
    <property type="term" value="F:RNA binding"/>
    <property type="evidence" value="ECO:0000318"/>
    <property type="project" value="GO_Central"/>
</dbReference>
<dbReference type="GO" id="GO:0000398">
    <property type="term" value="P:mRNA splicing, via spliceosome"/>
    <property type="evidence" value="ECO:0000318"/>
    <property type="project" value="GO_Central"/>
</dbReference>
<dbReference type="FunFam" id="1.25.40.180:FF:000192">
    <property type="entry name" value="Pre-mRNA-splicing factor CWC22"/>
    <property type="match status" value="1"/>
</dbReference>
<dbReference type="Gene3D" id="1.25.40.180">
    <property type="match status" value="1"/>
</dbReference>
<dbReference type="InterPro" id="IPR016024">
    <property type="entry name" value="ARM-type_fold"/>
</dbReference>
<dbReference type="InterPro" id="IPR050781">
    <property type="entry name" value="CWC22_splicing_factor"/>
</dbReference>
<dbReference type="InterPro" id="IPR003891">
    <property type="entry name" value="Initiation_fac_eIF4g_MI"/>
</dbReference>
<dbReference type="InterPro" id="IPR003890">
    <property type="entry name" value="MIF4G-like_typ-3"/>
</dbReference>
<dbReference type="PANTHER" id="PTHR18034">
    <property type="entry name" value="CELL CYCLE CONTROL PROTEIN CWF22-RELATED"/>
    <property type="match status" value="1"/>
</dbReference>
<dbReference type="PANTHER" id="PTHR18034:SF3">
    <property type="entry name" value="PRE-MRNA-SPLICING FACTOR CWC22 HOMOLOG"/>
    <property type="match status" value="1"/>
</dbReference>
<dbReference type="Pfam" id="PF02847">
    <property type="entry name" value="MA3"/>
    <property type="match status" value="1"/>
</dbReference>
<dbReference type="SMART" id="SM00544">
    <property type="entry name" value="MA3"/>
    <property type="match status" value="1"/>
</dbReference>
<dbReference type="SMART" id="SM00543">
    <property type="entry name" value="MIF4G"/>
    <property type="match status" value="1"/>
</dbReference>
<dbReference type="SUPFAM" id="SSF48371">
    <property type="entry name" value="ARM repeat"/>
    <property type="match status" value="1"/>
</dbReference>
<dbReference type="PROSITE" id="PS51366">
    <property type="entry name" value="MI"/>
    <property type="match status" value="1"/>
</dbReference>
<organism>
    <name type="scientific">Candida albicans (strain SC5314 / ATCC MYA-2876)</name>
    <name type="common">Yeast</name>
    <dbReference type="NCBI Taxonomy" id="237561"/>
    <lineage>
        <taxon>Eukaryota</taxon>
        <taxon>Fungi</taxon>
        <taxon>Dikarya</taxon>
        <taxon>Ascomycota</taxon>
        <taxon>Saccharomycotina</taxon>
        <taxon>Pichiomycetes</taxon>
        <taxon>Debaryomycetaceae</taxon>
        <taxon>Candida/Lodderomyces clade</taxon>
        <taxon>Candida</taxon>
    </lineage>
</organism>
<name>CWC22_CANAL</name>
<reference key="1">
    <citation type="journal article" date="2004" name="Proc. Natl. Acad. Sci. U.S.A.">
        <title>The diploid genome sequence of Candida albicans.</title>
        <authorList>
            <person name="Jones T."/>
            <person name="Federspiel N.A."/>
            <person name="Chibana H."/>
            <person name="Dungan J."/>
            <person name="Kalman S."/>
            <person name="Magee B.B."/>
            <person name="Newport G."/>
            <person name="Thorstenson Y.R."/>
            <person name="Agabian N."/>
            <person name="Magee P.T."/>
            <person name="Davis R.W."/>
            <person name="Scherer S."/>
        </authorList>
    </citation>
    <scope>NUCLEOTIDE SEQUENCE [LARGE SCALE GENOMIC DNA]</scope>
    <source>
        <strain>SC5314 / ATCC MYA-2876</strain>
    </source>
</reference>
<reference key="2">
    <citation type="journal article" date="2007" name="Genome Biol.">
        <title>Assembly of the Candida albicans genome into sixteen supercontigs aligned on the eight chromosomes.</title>
        <authorList>
            <person name="van het Hoog M."/>
            <person name="Rast T.J."/>
            <person name="Martchenko M."/>
            <person name="Grindle S."/>
            <person name="Dignard D."/>
            <person name="Hogues H."/>
            <person name="Cuomo C."/>
            <person name="Berriman M."/>
            <person name="Scherer S."/>
            <person name="Magee B.B."/>
            <person name="Whiteway M."/>
            <person name="Chibana H."/>
            <person name="Nantel A."/>
            <person name="Magee P.T."/>
        </authorList>
    </citation>
    <scope>GENOME REANNOTATION</scope>
    <source>
        <strain>SC5314 / ATCC MYA-2876</strain>
    </source>
</reference>
<reference key="3">
    <citation type="journal article" date="2013" name="Genome Biol.">
        <title>Assembly of a phased diploid Candida albicans genome facilitates allele-specific measurements and provides a simple model for repeat and indel structure.</title>
        <authorList>
            <person name="Muzzey D."/>
            <person name="Schwartz K."/>
            <person name="Weissman J.S."/>
            <person name="Sherlock G."/>
        </authorList>
    </citation>
    <scope>NUCLEOTIDE SEQUENCE [LARGE SCALE GENOMIC DNA]</scope>
    <scope>GENOME REANNOTATION</scope>
    <source>
        <strain>SC5314 / ATCC MYA-2876</strain>
    </source>
</reference>
<keyword id="KW-0963">Cytoplasm</keyword>
<keyword id="KW-0507">mRNA processing</keyword>
<keyword id="KW-0508">mRNA splicing</keyword>
<keyword id="KW-0539">Nucleus</keyword>
<keyword id="KW-1185">Reference proteome</keyword>
<keyword id="KW-0747">Spliceosome</keyword>
<evidence type="ECO:0000250" key="1"/>
<evidence type="ECO:0000255" key="2">
    <source>
        <dbReference type="PROSITE-ProRule" id="PRU00698"/>
    </source>
</evidence>
<evidence type="ECO:0000256" key="3">
    <source>
        <dbReference type="SAM" id="MobiDB-lite"/>
    </source>
</evidence>
<evidence type="ECO:0000305" key="4"/>